<organism>
    <name type="scientific">Vibrio campbellii (strain ATCC BAA-1116)</name>
    <dbReference type="NCBI Taxonomy" id="2902295"/>
    <lineage>
        <taxon>Bacteria</taxon>
        <taxon>Pseudomonadati</taxon>
        <taxon>Pseudomonadota</taxon>
        <taxon>Gammaproteobacteria</taxon>
        <taxon>Vibrionales</taxon>
        <taxon>Vibrionaceae</taxon>
        <taxon>Vibrio</taxon>
    </lineage>
</organism>
<proteinExistence type="inferred from homology"/>
<feature type="chain" id="PRO_1000006780" description="Aspartate--tRNA ligase">
    <location>
        <begin position="1"/>
        <end position="592"/>
    </location>
</feature>
<feature type="region of interest" description="Aspartate" evidence="1">
    <location>
        <begin position="195"/>
        <end position="198"/>
    </location>
</feature>
<feature type="binding site" evidence="1">
    <location>
        <position position="171"/>
    </location>
    <ligand>
        <name>L-aspartate</name>
        <dbReference type="ChEBI" id="CHEBI:29991"/>
    </ligand>
</feature>
<feature type="binding site" evidence="1">
    <location>
        <begin position="217"/>
        <end position="219"/>
    </location>
    <ligand>
        <name>ATP</name>
        <dbReference type="ChEBI" id="CHEBI:30616"/>
    </ligand>
</feature>
<feature type="binding site" evidence="1">
    <location>
        <position position="217"/>
    </location>
    <ligand>
        <name>L-aspartate</name>
        <dbReference type="ChEBI" id="CHEBI:29991"/>
    </ligand>
</feature>
<feature type="binding site" evidence="1">
    <location>
        <position position="226"/>
    </location>
    <ligand>
        <name>ATP</name>
        <dbReference type="ChEBI" id="CHEBI:30616"/>
    </ligand>
</feature>
<feature type="binding site" evidence="1">
    <location>
        <position position="448"/>
    </location>
    <ligand>
        <name>L-aspartate</name>
        <dbReference type="ChEBI" id="CHEBI:29991"/>
    </ligand>
</feature>
<feature type="binding site" evidence="1">
    <location>
        <position position="482"/>
    </location>
    <ligand>
        <name>ATP</name>
        <dbReference type="ChEBI" id="CHEBI:30616"/>
    </ligand>
</feature>
<feature type="binding site" evidence="1">
    <location>
        <position position="489"/>
    </location>
    <ligand>
        <name>L-aspartate</name>
        <dbReference type="ChEBI" id="CHEBI:29991"/>
    </ligand>
</feature>
<feature type="binding site" evidence="1">
    <location>
        <begin position="534"/>
        <end position="537"/>
    </location>
    <ligand>
        <name>ATP</name>
        <dbReference type="ChEBI" id="CHEBI:30616"/>
    </ligand>
</feature>
<comment type="function">
    <text evidence="1">Catalyzes the attachment of L-aspartate to tRNA(Asp) in a two-step reaction: L-aspartate is first activated by ATP to form Asp-AMP and then transferred to the acceptor end of tRNA(Asp).</text>
</comment>
<comment type="catalytic activity">
    <reaction evidence="1">
        <text>tRNA(Asp) + L-aspartate + ATP = L-aspartyl-tRNA(Asp) + AMP + diphosphate</text>
        <dbReference type="Rhea" id="RHEA:19649"/>
        <dbReference type="Rhea" id="RHEA-COMP:9660"/>
        <dbReference type="Rhea" id="RHEA-COMP:9678"/>
        <dbReference type="ChEBI" id="CHEBI:29991"/>
        <dbReference type="ChEBI" id="CHEBI:30616"/>
        <dbReference type="ChEBI" id="CHEBI:33019"/>
        <dbReference type="ChEBI" id="CHEBI:78442"/>
        <dbReference type="ChEBI" id="CHEBI:78516"/>
        <dbReference type="ChEBI" id="CHEBI:456215"/>
        <dbReference type="EC" id="6.1.1.12"/>
    </reaction>
</comment>
<comment type="subunit">
    <text evidence="1">Homodimer.</text>
</comment>
<comment type="subcellular location">
    <subcellularLocation>
        <location evidence="1">Cytoplasm</location>
    </subcellularLocation>
</comment>
<comment type="similarity">
    <text evidence="1">Belongs to the class-II aminoacyl-tRNA synthetase family. Type 1 subfamily.</text>
</comment>
<gene>
    <name evidence="1" type="primary">aspS</name>
    <name type="ordered locus">VIBHAR_01597</name>
</gene>
<evidence type="ECO:0000255" key="1">
    <source>
        <dbReference type="HAMAP-Rule" id="MF_00044"/>
    </source>
</evidence>
<name>SYD_VIBC1</name>
<protein>
    <recommendedName>
        <fullName evidence="1">Aspartate--tRNA ligase</fullName>
        <ecNumber evidence="1">6.1.1.12</ecNumber>
    </recommendedName>
    <alternativeName>
        <fullName evidence="1">Aspartyl-tRNA synthetase</fullName>
        <shortName evidence="1">AspRS</shortName>
    </alternativeName>
</protein>
<reference key="1">
    <citation type="submission" date="2007-08" db="EMBL/GenBank/DDBJ databases">
        <authorList>
            <consortium name="The Vibrio harveyi Genome Sequencing Project"/>
            <person name="Bassler B."/>
            <person name="Clifton S.W."/>
            <person name="Fulton L."/>
            <person name="Delehaunty K."/>
            <person name="Fronick C."/>
            <person name="Harrison M."/>
            <person name="Markivic C."/>
            <person name="Fulton R."/>
            <person name="Tin-Wollam A.-M."/>
            <person name="Shah N."/>
            <person name="Pepin K."/>
            <person name="Nash W."/>
            <person name="Thiruvilangam P."/>
            <person name="Bhonagiri V."/>
            <person name="Waters C."/>
            <person name="Tu K.C."/>
            <person name="Irgon J."/>
            <person name="Wilson R.K."/>
        </authorList>
    </citation>
    <scope>NUCLEOTIDE SEQUENCE [LARGE SCALE GENOMIC DNA]</scope>
    <source>
        <strain>ATCC BAA-1116 / BB120</strain>
    </source>
</reference>
<accession>A7N1J1</accession>
<dbReference type="EC" id="6.1.1.12" evidence="1"/>
<dbReference type="EMBL" id="CP000789">
    <property type="protein sequence ID" value="ABU70567.1"/>
    <property type="molecule type" value="Genomic_DNA"/>
</dbReference>
<dbReference type="RefSeq" id="WP_012127442.1">
    <property type="nucleotide sequence ID" value="NC_009783.1"/>
</dbReference>
<dbReference type="SMR" id="A7N1J1"/>
<dbReference type="KEGG" id="vha:VIBHAR_01597"/>
<dbReference type="PATRIC" id="fig|338187.25.peg.1065"/>
<dbReference type="Proteomes" id="UP000008152">
    <property type="component" value="Chromosome I"/>
</dbReference>
<dbReference type="GO" id="GO:0005737">
    <property type="term" value="C:cytoplasm"/>
    <property type="evidence" value="ECO:0007669"/>
    <property type="project" value="UniProtKB-SubCell"/>
</dbReference>
<dbReference type="GO" id="GO:0004815">
    <property type="term" value="F:aspartate-tRNA ligase activity"/>
    <property type="evidence" value="ECO:0007669"/>
    <property type="project" value="UniProtKB-UniRule"/>
</dbReference>
<dbReference type="GO" id="GO:0005524">
    <property type="term" value="F:ATP binding"/>
    <property type="evidence" value="ECO:0007669"/>
    <property type="project" value="UniProtKB-UniRule"/>
</dbReference>
<dbReference type="GO" id="GO:0003676">
    <property type="term" value="F:nucleic acid binding"/>
    <property type="evidence" value="ECO:0007669"/>
    <property type="project" value="InterPro"/>
</dbReference>
<dbReference type="GO" id="GO:0006422">
    <property type="term" value="P:aspartyl-tRNA aminoacylation"/>
    <property type="evidence" value="ECO:0007669"/>
    <property type="project" value="UniProtKB-UniRule"/>
</dbReference>
<dbReference type="CDD" id="cd00777">
    <property type="entry name" value="AspRS_core"/>
    <property type="match status" value="1"/>
</dbReference>
<dbReference type="CDD" id="cd04317">
    <property type="entry name" value="EcAspRS_like_N"/>
    <property type="match status" value="1"/>
</dbReference>
<dbReference type="FunFam" id="2.40.50.140:FF:000080">
    <property type="entry name" value="Aspartate--tRNA ligase"/>
    <property type="match status" value="1"/>
</dbReference>
<dbReference type="Gene3D" id="3.30.930.10">
    <property type="entry name" value="Bira Bifunctional Protein, Domain 2"/>
    <property type="match status" value="1"/>
</dbReference>
<dbReference type="Gene3D" id="3.30.1360.30">
    <property type="entry name" value="GAD-like domain"/>
    <property type="match status" value="1"/>
</dbReference>
<dbReference type="Gene3D" id="2.40.50.140">
    <property type="entry name" value="Nucleic acid-binding proteins"/>
    <property type="match status" value="1"/>
</dbReference>
<dbReference type="HAMAP" id="MF_00044">
    <property type="entry name" value="Asp_tRNA_synth_type1"/>
    <property type="match status" value="1"/>
</dbReference>
<dbReference type="InterPro" id="IPR004364">
    <property type="entry name" value="Aa-tRNA-synt_II"/>
</dbReference>
<dbReference type="InterPro" id="IPR006195">
    <property type="entry name" value="aa-tRNA-synth_II"/>
</dbReference>
<dbReference type="InterPro" id="IPR045864">
    <property type="entry name" value="aa-tRNA-synth_II/BPL/LPL"/>
</dbReference>
<dbReference type="InterPro" id="IPR004524">
    <property type="entry name" value="Asp-tRNA-ligase_1"/>
</dbReference>
<dbReference type="InterPro" id="IPR047089">
    <property type="entry name" value="Asp-tRNA-ligase_1_N"/>
</dbReference>
<dbReference type="InterPro" id="IPR002312">
    <property type="entry name" value="Asp/Asn-tRNA-synth_IIb"/>
</dbReference>
<dbReference type="InterPro" id="IPR047090">
    <property type="entry name" value="AspRS_core"/>
</dbReference>
<dbReference type="InterPro" id="IPR004115">
    <property type="entry name" value="GAD-like_sf"/>
</dbReference>
<dbReference type="InterPro" id="IPR029351">
    <property type="entry name" value="GAD_dom"/>
</dbReference>
<dbReference type="InterPro" id="IPR012340">
    <property type="entry name" value="NA-bd_OB-fold"/>
</dbReference>
<dbReference type="InterPro" id="IPR004365">
    <property type="entry name" value="NA-bd_OB_tRNA"/>
</dbReference>
<dbReference type="NCBIfam" id="TIGR00459">
    <property type="entry name" value="aspS_bact"/>
    <property type="match status" value="1"/>
</dbReference>
<dbReference type="NCBIfam" id="NF001750">
    <property type="entry name" value="PRK00476.1"/>
    <property type="match status" value="1"/>
</dbReference>
<dbReference type="PANTHER" id="PTHR22594:SF5">
    <property type="entry name" value="ASPARTATE--TRNA LIGASE, MITOCHONDRIAL"/>
    <property type="match status" value="1"/>
</dbReference>
<dbReference type="PANTHER" id="PTHR22594">
    <property type="entry name" value="ASPARTYL/LYSYL-TRNA SYNTHETASE"/>
    <property type="match status" value="1"/>
</dbReference>
<dbReference type="Pfam" id="PF02938">
    <property type="entry name" value="GAD"/>
    <property type="match status" value="1"/>
</dbReference>
<dbReference type="Pfam" id="PF00152">
    <property type="entry name" value="tRNA-synt_2"/>
    <property type="match status" value="1"/>
</dbReference>
<dbReference type="Pfam" id="PF01336">
    <property type="entry name" value="tRNA_anti-codon"/>
    <property type="match status" value="1"/>
</dbReference>
<dbReference type="PRINTS" id="PR01042">
    <property type="entry name" value="TRNASYNTHASP"/>
</dbReference>
<dbReference type="SUPFAM" id="SSF55681">
    <property type="entry name" value="Class II aaRS and biotin synthetases"/>
    <property type="match status" value="1"/>
</dbReference>
<dbReference type="SUPFAM" id="SSF55261">
    <property type="entry name" value="GAD domain-like"/>
    <property type="match status" value="1"/>
</dbReference>
<dbReference type="SUPFAM" id="SSF50249">
    <property type="entry name" value="Nucleic acid-binding proteins"/>
    <property type="match status" value="1"/>
</dbReference>
<dbReference type="PROSITE" id="PS50862">
    <property type="entry name" value="AA_TRNA_LIGASE_II"/>
    <property type="match status" value="1"/>
</dbReference>
<sequence length="592" mass="65881">MRTHYCGHLNKSLAGQTVELCGWVNRRRDLGGLIFIDMRDREGIVQVVVDPDMADAYEVANTLRNEFCIKLTGEVRVRPESQVNKDMATGEVEILAKGLEIINRSDVLPLDFNQKNSEEQRLKYRYLDLRRPEMSDRIKLRAKASSFVRRFLDDNGFLDIETPVLTKATPEGARDYLVPSRVHKGSFYALPQSPQLFKQLLMMSGFDRYYQIVKCFRDEDLRADRQPEFTQIDIETSFMTADQVRATTEKMVREMWQELLNVDLGEFPVMPFSEAIRRFGSDKPDLRNPLELVDVADLVKDVEFKVFSGPANDEKGRVAVIRVPGGAELTRKQIDGYAEFVGIYGAKGLAWMKVNDRAAGMEGIQSPVAKFLNEDVINGILDRTQAESGDIILFGADKANIVAEALGALRLKLGKDLDITKEGTWAPLWVVDFPMFEEDDEGNLHAMHHPFTSPLGVTAEELKANPAAANSNAYDMVLNGYEVGGGSVRIHNAEMQAAVFDILGINAEEQQLKFGFLLDALKFGTPPHAGLAFGLDRLVMLLCGTENIRDVIAFPKTTAAACLLTDAPSLANPAALEELAIAVTVAKEKDAE</sequence>
<keyword id="KW-0030">Aminoacyl-tRNA synthetase</keyword>
<keyword id="KW-0067">ATP-binding</keyword>
<keyword id="KW-0963">Cytoplasm</keyword>
<keyword id="KW-0436">Ligase</keyword>
<keyword id="KW-0547">Nucleotide-binding</keyword>
<keyword id="KW-0648">Protein biosynthesis</keyword>